<accession>P52249</accession>
<protein>
    <recommendedName>
        <fullName>Ovomucoid</fullName>
    </recommendedName>
</protein>
<sequence length="54" mass="5829">TATVDCSDYPKPACLLEYMPLCGSDNKTYDNKCSFCNAVVDSNGTLSLSHFGKC</sequence>
<reference key="1">
    <citation type="journal article" date="1993" name="J. Protein Chem.">
        <title>Amino acid sequences of ovomucoid third domains from 27 additional species of birds.</title>
        <authorList>
            <person name="Apostol I."/>
            <person name="Giletto A."/>
            <person name="Komiyama T."/>
            <person name="Zhang W."/>
            <person name="Laskowski M. Jr."/>
        </authorList>
    </citation>
    <scope>PROTEIN SEQUENCE</scope>
</reference>
<keyword id="KW-0903">Direct protein sequencing</keyword>
<keyword id="KW-1015">Disulfide bond</keyword>
<keyword id="KW-0325">Glycoprotein</keyword>
<keyword id="KW-0646">Protease inhibitor</keyword>
<keyword id="KW-0677">Repeat</keyword>
<keyword id="KW-0964">Secreted</keyword>
<keyword id="KW-0722">Serine protease inhibitor</keyword>
<evidence type="ECO:0000255" key="1">
    <source>
        <dbReference type="PROSITE-ProRule" id="PRU00798"/>
    </source>
</evidence>
<feature type="chain" id="PRO_0000073151" description="Ovomucoid">
    <location>
        <begin position="1" status="less than"/>
        <end position="54" status="greater than"/>
    </location>
</feature>
<feature type="domain" description="Kazal-like" evidence="1">
    <location>
        <begin position="4"/>
        <end position="54"/>
    </location>
</feature>
<feature type="site" description="Reactive bond 3">
    <location>
        <begin position="16"/>
        <end position="17"/>
    </location>
</feature>
<feature type="glycosylation site" description="N-linked (GlcNAc...) asparagine">
    <location>
        <position position="43"/>
    </location>
</feature>
<feature type="disulfide bond">
    <location>
        <begin position="6"/>
        <end position="36"/>
    </location>
</feature>
<feature type="disulfide bond">
    <location>
        <begin position="14"/>
        <end position="33"/>
    </location>
</feature>
<feature type="disulfide bond">
    <location>
        <begin position="22"/>
        <end position="54"/>
    </location>
</feature>
<feature type="non-terminal residue">
    <location>
        <position position="1"/>
    </location>
</feature>
<feature type="non-terminal residue">
    <location>
        <position position="54"/>
    </location>
</feature>
<organism>
    <name type="scientific">Opisthocomus hoazin</name>
    <name type="common">Hoatzin</name>
    <name type="synonym">Phasianus hoazin</name>
    <dbReference type="NCBI Taxonomy" id="30419"/>
    <lineage>
        <taxon>Eukaryota</taxon>
        <taxon>Metazoa</taxon>
        <taxon>Chordata</taxon>
        <taxon>Craniata</taxon>
        <taxon>Vertebrata</taxon>
        <taxon>Euteleostomi</taxon>
        <taxon>Archelosauria</taxon>
        <taxon>Archosauria</taxon>
        <taxon>Dinosauria</taxon>
        <taxon>Saurischia</taxon>
        <taxon>Theropoda</taxon>
        <taxon>Coelurosauria</taxon>
        <taxon>Aves</taxon>
        <taxon>Neognathae</taxon>
        <taxon>Neoaves</taxon>
        <taxon>Opisthocomiformes</taxon>
        <taxon>Opisthocomidae</taxon>
        <taxon>Opisthocomus</taxon>
    </lineage>
</organism>
<proteinExistence type="evidence at protein level"/>
<dbReference type="PIR" id="H61588">
    <property type="entry name" value="H61588"/>
</dbReference>
<dbReference type="SMR" id="P52249"/>
<dbReference type="GO" id="GO:0005576">
    <property type="term" value="C:extracellular region"/>
    <property type="evidence" value="ECO:0007669"/>
    <property type="project" value="UniProtKB-SubCell"/>
</dbReference>
<dbReference type="GO" id="GO:0004867">
    <property type="term" value="F:serine-type endopeptidase inhibitor activity"/>
    <property type="evidence" value="ECO:0007669"/>
    <property type="project" value="UniProtKB-KW"/>
</dbReference>
<dbReference type="CDD" id="cd00104">
    <property type="entry name" value="KAZAL_FS"/>
    <property type="match status" value="1"/>
</dbReference>
<dbReference type="FunFam" id="3.30.60.30:FF:000037">
    <property type="entry name" value="Ovomucoid"/>
    <property type="match status" value="1"/>
</dbReference>
<dbReference type="Gene3D" id="3.30.60.30">
    <property type="match status" value="1"/>
</dbReference>
<dbReference type="InterPro" id="IPR050159">
    <property type="entry name" value="Kazal-type_SerProtInhib"/>
</dbReference>
<dbReference type="InterPro" id="IPR002350">
    <property type="entry name" value="Kazal_dom"/>
</dbReference>
<dbReference type="InterPro" id="IPR036058">
    <property type="entry name" value="Kazal_dom_sf"/>
</dbReference>
<dbReference type="InterPro" id="IPR001239">
    <property type="entry name" value="Prot_inh_Kazal-m"/>
</dbReference>
<dbReference type="PANTHER" id="PTHR47499:SF1">
    <property type="entry name" value="SERINE PROTEASE INHIBITOR KAZAL-TYPE 7"/>
    <property type="match status" value="1"/>
</dbReference>
<dbReference type="PANTHER" id="PTHR47499">
    <property type="entry name" value="SERINE PROTEASE INHIBITOR KAZAL-TYPE 7 SPINK7"/>
    <property type="match status" value="1"/>
</dbReference>
<dbReference type="Pfam" id="PF00050">
    <property type="entry name" value="Kazal_1"/>
    <property type="match status" value="1"/>
</dbReference>
<dbReference type="PRINTS" id="PR00290">
    <property type="entry name" value="KAZALINHBTR"/>
</dbReference>
<dbReference type="SMART" id="SM00280">
    <property type="entry name" value="KAZAL"/>
    <property type="match status" value="1"/>
</dbReference>
<dbReference type="SUPFAM" id="SSF100895">
    <property type="entry name" value="Kazal-type serine protease inhibitors"/>
    <property type="match status" value="1"/>
</dbReference>
<dbReference type="PROSITE" id="PS00282">
    <property type="entry name" value="KAZAL_1"/>
    <property type="match status" value="1"/>
</dbReference>
<dbReference type="PROSITE" id="PS51465">
    <property type="entry name" value="KAZAL_2"/>
    <property type="match status" value="1"/>
</dbReference>
<comment type="subcellular location">
    <subcellularLocation>
        <location>Secreted</location>
    </subcellularLocation>
</comment>
<comment type="domain">
    <text>Avian ovomucoid consists of three homologous, tandem Kazal family inhibitory domains.</text>
</comment>
<name>IOVO_OPIHO</name>